<accession>A4WBM9</accession>
<reference key="1">
    <citation type="journal article" date="2010" name="PLoS Genet.">
        <title>Genome sequence of the plant growth promoting endophytic bacterium Enterobacter sp. 638.</title>
        <authorList>
            <person name="Taghavi S."/>
            <person name="van der Lelie D."/>
            <person name="Hoffman A."/>
            <person name="Zhang Y.B."/>
            <person name="Walla M.D."/>
            <person name="Vangronsveld J."/>
            <person name="Newman L."/>
            <person name="Monchy S."/>
        </authorList>
    </citation>
    <scope>NUCLEOTIDE SEQUENCE [LARGE SCALE GENOMIC DNA]</scope>
    <source>
        <strain>638</strain>
    </source>
</reference>
<evidence type="ECO:0000255" key="1">
    <source>
        <dbReference type="HAMAP-Rule" id="MF_00795"/>
    </source>
</evidence>
<sequence length="247" mass="26759">MALLEICCYSAECAVTAQQYGADRIELCAAPKEGGLTPSYGVLKSVRQTVTIPVHPIIRPRGGDFFYSAGEFDAMLEDIAMVHDLGFPGLVLGLLDEDGNVDMPRMRQVMTAAKGMAVTFHRAFDMCRNPRQAFDKLAELGVARILTSGQESSAEKGIKLITELKAQSGVPIIMAGAGVRASNLEIFINAGVEELHSSAGKWTPSPMRYRNTGLSMSTDAEADEYSRYGVEGESVAVMKSIIERHHV</sequence>
<gene>
    <name evidence="1" type="primary">cutC</name>
    <name type="ordered locus">Ent638_2440</name>
</gene>
<protein>
    <recommendedName>
        <fullName evidence="1">PF03932 family protein CutC</fullName>
    </recommendedName>
</protein>
<name>CUTC_ENT38</name>
<dbReference type="EMBL" id="CP000653">
    <property type="protein sequence ID" value="ABP61109.1"/>
    <property type="molecule type" value="Genomic_DNA"/>
</dbReference>
<dbReference type="RefSeq" id="WP_015959442.1">
    <property type="nucleotide sequence ID" value="NC_009436.1"/>
</dbReference>
<dbReference type="SMR" id="A4WBM9"/>
<dbReference type="STRING" id="399742.Ent638_2440"/>
<dbReference type="KEGG" id="ent:Ent638_2440"/>
<dbReference type="eggNOG" id="COG3142">
    <property type="taxonomic scope" value="Bacteria"/>
</dbReference>
<dbReference type="HOGENOM" id="CLU_050555_3_1_6"/>
<dbReference type="OrthoDB" id="9815677at2"/>
<dbReference type="Proteomes" id="UP000000230">
    <property type="component" value="Chromosome"/>
</dbReference>
<dbReference type="GO" id="GO:0005737">
    <property type="term" value="C:cytoplasm"/>
    <property type="evidence" value="ECO:0007669"/>
    <property type="project" value="UniProtKB-SubCell"/>
</dbReference>
<dbReference type="GO" id="GO:0005507">
    <property type="term" value="F:copper ion binding"/>
    <property type="evidence" value="ECO:0007669"/>
    <property type="project" value="TreeGrafter"/>
</dbReference>
<dbReference type="FunFam" id="3.20.20.380:FF:000001">
    <property type="entry name" value="Copper homeostasis protein CutC"/>
    <property type="match status" value="1"/>
</dbReference>
<dbReference type="Gene3D" id="3.20.20.380">
    <property type="entry name" value="Copper homeostasis (CutC) domain"/>
    <property type="match status" value="1"/>
</dbReference>
<dbReference type="HAMAP" id="MF_00795">
    <property type="entry name" value="CutC"/>
    <property type="match status" value="1"/>
</dbReference>
<dbReference type="InterPro" id="IPR005627">
    <property type="entry name" value="CutC-like"/>
</dbReference>
<dbReference type="InterPro" id="IPR036822">
    <property type="entry name" value="CutC-like_dom_sf"/>
</dbReference>
<dbReference type="NCBIfam" id="NF008603">
    <property type="entry name" value="PRK11572.1"/>
    <property type="match status" value="1"/>
</dbReference>
<dbReference type="PANTHER" id="PTHR12598">
    <property type="entry name" value="COPPER HOMEOSTASIS PROTEIN CUTC"/>
    <property type="match status" value="1"/>
</dbReference>
<dbReference type="PANTHER" id="PTHR12598:SF0">
    <property type="entry name" value="COPPER HOMEOSTASIS PROTEIN CUTC HOMOLOG"/>
    <property type="match status" value="1"/>
</dbReference>
<dbReference type="Pfam" id="PF03932">
    <property type="entry name" value="CutC"/>
    <property type="match status" value="1"/>
</dbReference>
<dbReference type="SUPFAM" id="SSF110395">
    <property type="entry name" value="CutC-like"/>
    <property type="match status" value="1"/>
</dbReference>
<proteinExistence type="inferred from homology"/>
<comment type="subcellular location">
    <subcellularLocation>
        <location evidence="1">Cytoplasm</location>
    </subcellularLocation>
</comment>
<comment type="similarity">
    <text evidence="1">Belongs to the CutC family.</text>
</comment>
<comment type="caution">
    <text evidence="1">Once thought to be involved in copper homeostasis, experiments in E.coli have shown this is not the case.</text>
</comment>
<organism>
    <name type="scientific">Enterobacter sp. (strain 638)</name>
    <dbReference type="NCBI Taxonomy" id="399742"/>
    <lineage>
        <taxon>Bacteria</taxon>
        <taxon>Pseudomonadati</taxon>
        <taxon>Pseudomonadota</taxon>
        <taxon>Gammaproteobacteria</taxon>
        <taxon>Enterobacterales</taxon>
        <taxon>Enterobacteriaceae</taxon>
        <taxon>Enterobacter</taxon>
    </lineage>
</organism>
<feature type="chain" id="PRO_1000062256" description="PF03932 family protein CutC">
    <location>
        <begin position="1"/>
        <end position="247"/>
    </location>
</feature>
<keyword id="KW-0963">Cytoplasm</keyword>